<evidence type="ECO:0000250" key="1">
    <source>
        <dbReference type="UniProtKB" id="Q69XJ0"/>
    </source>
</evidence>
<evidence type="ECO:0000255" key="2">
    <source>
        <dbReference type="PROSITE-ProRule" id="PRU00714"/>
    </source>
</evidence>
<evidence type="ECO:0000256" key="3">
    <source>
        <dbReference type="SAM" id="MobiDB-lite"/>
    </source>
</evidence>
<evidence type="ECO:0000312" key="4">
    <source>
        <dbReference type="EMBL" id="EEC80929.1"/>
    </source>
</evidence>
<keyword id="KW-0539">Nucleus</keyword>
<keyword id="KW-1185">Reference proteome</keyword>
<comment type="function">
    <text evidence="1">Involved in plant adaptation to phosphate (Pi) starvation (By similarity). Inhibits PHR2 DNA-binding activity via a Pi-dependent protein interaction (By similarity). Suppresses the regulation on expression of PT2 by PHR2 and accumulation of shoot Pi (By similarity). Optimizes growth under phosphate-limited conditions through a negative feedback loop of the PSI (phosphate starvation-induced) signaling pathway (By similarity). Regulates the expression of SPX2, SPX3 and SPX5 (By similarity). May be an important link between signal transduction pathways related to phosphate starvation and cold stress (By similarity). Together with SPX2, plays a negative role in the regulation of leaf inclination by preventing RLI1 transcription factor activity in Pi depleted conditions (By similarity).</text>
</comment>
<comment type="subunit">
    <text evidence="1">Interacts (via SPX domain) with PHR2 (via C-terminus) (By similarity). Interacts with RLI1 in the nucleus to prevents its positive regulation of leaf inclination during phosphate (Pi) starvation (By similarity).</text>
</comment>
<comment type="subcellular location">
    <subcellularLocation>
        <location evidence="1">Nucleus</location>
    </subcellularLocation>
</comment>
<comment type="domain">
    <text evidence="1">The SPX domain is sufficient for inhibition of PHR2 binding to DNA.</text>
</comment>
<protein>
    <recommendedName>
        <fullName evidence="1">SPX domain-containing protein 1</fullName>
    </recommendedName>
    <alternativeName>
        <fullName evidence="1">Protein SPX DOMAIN GENE 1</fullName>
        <shortName evidence="1">OsSPX1</shortName>
    </alternativeName>
</protein>
<name>SPX1_ORYSI</name>
<proteinExistence type="inferred from homology"/>
<gene>
    <name evidence="1" type="primary">SPX1</name>
    <name evidence="4" type="ORF">OsI_23619</name>
</gene>
<organism>
    <name type="scientific">Oryza sativa subsp. indica</name>
    <name type="common">Rice</name>
    <dbReference type="NCBI Taxonomy" id="39946"/>
    <lineage>
        <taxon>Eukaryota</taxon>
        <taxon>Viridiplantae</taxon>
        <taxon>Streptophyta</taxon>
        <taxon>Embryophyta</taxon>
        <taxon>Tracheophyta</taxon>
        <taxon>Spermatophyta</taxon>
        <taxon>Magnoliopsida</taxon>
        <taxon>Liliopsida</taxon>
        <taxon>Poales</taxon>
        <taxon>Poaceae</taxon>
        <taxon>BOP clade</taxon>
        <taxon>Oryzoideae</taxon>
        <taxon>Oryzeae</taxon>
        <taxon>Oryzinae</taxon>
        <taxon>Oryza</taxon>
        <taxon>Oryza sativa</taxon>
    </lineage>
</organism>
<feature type="chain" id="PRO_0000398346" description="SPX domain-containing protein 1">
    <location>
        <begin position="1"/>
        <end position="295"/>
    </location>
</feature>
<feature type="domain" description="SPX" evidence="2">
    <location>
        <begin position="1"/>
        <end position="166"/>
    </location>
</feature>
<feature type="region of interest" description="Disordered" evidence="3">
    <location>
        <begin position="197"/>
        <end position="227"/>
    </location>
</feature>
<feature type="compositionally biased region" description="Basic and acidic residues" evidence="3">
    <location>
        <begin position="204"/>
        <end position="216"/>
    </location>
</feature>
<reference key="1">
    <citation type="journal article" date="2005" name="PLoS Biol.">
        <title>The genomes of Oryza sativa: a history of duplications.</title>
        <authorList>
            <person name="Yu J."/>
            <person name="Wang J."/>
            <person name="Lin W."/>
            <person name="Li S."/>
            <person name="Li H."/>
            <person name="Zhou J."/>
            <person name="Ni P."/>
            <person name="Dong W."/>
            <person name="Hu S."/>
            <person name="Zeng C."/>
            <person name="Zhang J."/>
            <person name="Zhang Y."/>
            <person name="Li R."/>
            <person name="Xu Z."/>
            <person name="Li S."/>
            <person name="Li X."/>
            <person name="Zheng H."/>
            <person name="Cong L."/>
            <person name="Lin L."/>
            <person name="Yin J."/>
            <person name="Geng J."/>
            <person name="Li G."/>
            <person name="Shi J."/>
            <person name="Liu J."/>
            <person name="Lv H."/>
            <person name="Li J."/>
            <person name="Wang J."/>
            <person name="Deng Y."/>
            <person name="Ran L."/>
            <person name="Shi X."/>
            <person name="Wang X."/>
            <person name="Wu Q."/>
            <person name="Li C."/>
            <person name="Ren X."/>
            <person name="Wang J."/>
            <person name="Wang X."/>
            <person name="Li D."/>
            <person name="Liu D."/>
            <person name="Zhang X."/>
            <person name="Ji Z."/>
            <person name="Zhao W."/>
            <person name="Sun Y."/>
            <person name="Zhang Z."/>
            <person name="Bao J."/>
            <person name="Han Y."/>
            <person name="Dong L."/>
            <person name="Ji J."/>
            <person name="Chen P."/>
            <person name="Wu S."/>
            <person name="Liu J."/>
            <person name="Xiao Y."/>
            <person name="Bu D."/>
            <person name="Tan J."/>
            <person name="Yang L."/>
            <person name="Ye C."/>
            <person name="Zhang J."/>
            <person name="Xu J."/>
            <person name="Zhou Y."/>
            <person name="Yu Y."/>
            <person name="Zhang B."/>
            <person name="Zhuang S."/>
            <person name="Wei H."/>
            <person name="Liu B."/>
            <person name="Lei M."/>
            <person name="Yu H."/>
            <person name="Li Y."/>
            <person name="Xu H."/>
            <person name="Wei S."/>
            <person name="He X."/>
            <person name="Fang L."/>
            <person name="Zhang Z."/>
            <person name="Zhang Y."/>
            <person name="Huang X."/>
            <person name="Su Z."/>
            <person name="Tong W."/>
            <person name="Li J."/>
            <person name="Tong Z."/>
            <person name="Li S."/>
            <person name="Ye J."/>
            <person name="Wang L."/>
            <person name="Fang L."/>
            <person name="Lei T."/>
            <person name="Chen C.-S."/>
            <person name="Chen H.-C."/>
            <person name="Xu Z."/>
            <person name="Li H."/>
            <person name="Huang H."/>
            <person name="Zhang F."/>
            <person name="Xu H."/>
            <person name="Li N."/>
            <person name="Zhao C."/>
            <person name="Li S."/>
            <person name="Dong L."/>
            <person name="Huang Y."/>
            <person name="Li L."/>
            <person name="Xi Y."/>
            <person name="Qi Q."/>
            <person name="Li W."/>
            <person name="Zhang B."/>
            <person name="Hu W."/>
            <person name="Zhang Y."/>
            <person name="Tian X."/>
            <person name="Jiao Y."/>
            <person name="Liang X."/>
            <person name="Jin J."/>
            <person name="Gao L."/>
            <person name="Zheng W."/>
            <person name="Hao B."/>
            <person name="Liu S.-M."/>
            <person name="Wang W."/>
            <person name="Yuan L."/>
            <person name="Cao M."/>
            <person name="McDermott J."/>
            <person name="Samudrala R."/>
            <person name="Wang J."/>
            <person name="Wong G.K.-S."/>
            <person name="Yang H."/>
        </authorList>
    </citation>
    <scope>NUCLEOTIDE SEQUENCE [LARGE SCALE GENOMIC DNA]</scope>
    <source>
        <strain>cv. 93-11</strain>
    </source>
</reference>
<dbReference type="EMBL" id="CM000131">
    <property type="protein sequence ID" value="EEC80929.1"/>
    <property type="molecule type" value="Genomic_DNA"/>
</dbReference>
<dbReference type="SMR" id="B8B4D0"/>
<dbReference type="STRING" id="39946.B8B4D0"/>
<dbReference type="EnsemblPlants" id="BGIOSGA020924-TA">
    <property type="protein sequence ID" value="BGIOSGA020924-PA"/>
    <property type="gene ID" value="BGIOSGA020924"/>
</dbReference>
<dbReference type="EnsemblPlants" id="OsIR64_06g0021180.01">
    <property type="protein sequence ID" value="OsIR64_06g0021180.01"/>
    <property type="gene ID" value="OsIR64_06g0021180"/>
</dbReference>
<dbReference type="EnsemblPlants" id="OsKYG_06g0021590.01">
    <property type="protein sequence ID" value="OsKYG_06g0021590.01"/>
    <property type="gene ID" value="OsKYG_06g0021590"/>
</dbReference>
<dbReference type="EnsemblPlants" id="OsMH63_06G021510_01">
    <property type="protein sequence ID" value="OsMH63_06G021510_01"/>
    <property type="gene ID" value="OsMH63_06G021510"/>
</dbReference>
<dbReference type="EnsemblPlants" id="OsPr106_06g0021750.01">
    <property type="protein sequence ID" value="OsPr106_06g0021750.01"/>
    <property type="gene ID" value="OsPr106_06g0021750"/>
</dbReference>
<dbReference type="Gramene" id="BGIOSGA020924-TA">
    <property type="protein sequence ID" value="BGIOSGA020924-PA"/>
    <property type="gene ID" value="BGIOSGA020924"/>
</dbReference>
<dbReference type="Gramene" id="OsIR64_06g0021180.01">
    <property type="protein sequence ID" value="OsIR64_06g0021180.01"/>
    <property type="gene ID" value="OsIR64_06g0021180"/>
</dbReference>
<dbReference type="Gramene" id="OsKYG_06g0021590.01">
    <property type="protein sequence ID" value="OsKYG_06g0021590.01"/>
    <property type="gene ID" value="OsKYG_06g0021590"/>
</dbReference>
<dbReference type="Gramene" id="OsMH63_06G021510_01">
    <property type="protein sequence ID" value="OsMH63_06G021510_01"/>
    <property type="gene ID" value="OsMH63_06G021510"/>
</dbReference>
<dbReference type="Gramene" id="OsPr106_06g0021750.01">
    <property type="protein sequence ID" value="OsPr106_06g0021750.01"/>
    <property type="gene ID" value="OsPr106_06g0021750"/>
</dbReference>
<dbReference type="HOGENOM" id="CLU_057600_1_1_1"/>
<dbReference type="OMA" id="IEYMESS"/>
<dbReference type="Proteomes" id="UP000007015">
    <property type="component" value="Chromosome 6"/>
</dbReference>
<dbReference type="GO" id="GO:0005634">
    <property type="term" value="C:nucleus"/>
    <property type="evidence" value="ECO:0007669"/>
    <property type="project" value="UniProtKB-SubCell"/>
</dbReference>
<dbReference type="GO" id="GO:0070417">
    <property type="term" value="P:cellular response to cold"/>
    <property type="evidence" value="ECO:0007669"/>
    <property type="project" value="EnsemblPlants"/>
</dbReference>
<dbReference type="GO" id="GO:0016036">
    <property type="term" value="P:cellular response to phosphate starvation"/>
    <property type="evidence" value="ECO:0007669"/>
    <property type="project" value="EnsemblPlants"/>
</dbReference>
<dbReference type="GO" id="GO:0051511">
    <property type="term" value="P:negative regulation of unidimensional cell growth"/>
    <property type="evidence" value="ECO:0007669"/>
    <property type="project" value="EnsemblPlants"/>
</dbReference>
<dbReference type="GO" id="GO:0080040">
    <property type="term" value="P:positive regulation of cellular response to phosphate starvation"/>
    <property type="evidence" value="ECO:0007669"/>
    <property type="project" value="EnsemblPlants"/>
</dbReference>
<dbReference type="GO" id="GO:2000024">
    <property type="term" value="P:regulation of leaf development"/>
    <property type="evidence" value="ECO:0007669"/>
    <property type="project" value="EnsemblPlants"/>
</dbReference>
<dbReference type="CDD" id="cd14481">
    <property type="entry name" value="SPX_AtSPX1_like"/>
    <property type="match status" value="1"/>
</dbReference>
<dbReference type="InterPro" id="IPR004331">
    <property type="entry name" value="SPX_dom"/>
</dbReference>
<dbReference type="InterPro" id="IPR031142">
    <property type="entry name" value="SPX_prot"/>
</dbReference>
<dbReference type="PANTHER" id="PTHR45978:SF5">
    <property type="entry name" value="SPX DOMAIN-CONTAINING PROTEIN 2"/>
    <property type="match status" value="1"/>
</dbReference>
<dbReference type="PANTHER" id="PTHR45978">
    <property type="entry name" value="SPX DOMAIN-CONTAINING PROTEIN 3"/>
    <property type="match status" value="1"/>
</dbReference>
<dbReference type="Pfam" id="PF03105">
    <property type="entry name" value="SPX"/>
    <property type="match status" value="2"/>
</dbReference>
<dbReference type="PROSITE" id="PS51382">
    <property type="entry name" value="SPX"/>
    <property type="match status" value="1"/>
</dbReference>
<accession>B8B4D0</accession>
<sequence length="295" mass="33122">MKFGKSLSSQIVETLPEWRDKFLSYKDLKKRLKLIGGGGGGEERQAKRARVAADGGEEEAAAAAMTPEEAGFMRLLEAELDKFNSFFVEKEEEYIIRQKELQDRVARAAGRESKEELMRVRKEIVDFHGEMVLLENYSALNYTGLVKILKKYDKRTGALIRLPFIQKVLQQPFFTTDLLYKLVKQCEAMLDQLLPSNELPVSSEDGRGDSTNEDKPSNPSSSLVNGGTIPELDEIEYMESMYMKGTVAALRSLKEIRSGSSTVSAFSLPPLQGDSSPEEQQELWNKIPVIEQAAK</sequence>